<dbReference type="EC" id="2.1.3.15" evidence="1"/>
<dbReference type="EMBL" id="CP000448">
    <property type="protein sequence ID" value="ABI69143.1"/>
    <property type="molecule type" value="Genomic_DNA"/>
</dbReference>
<dbReference type="RefSeq" id="WP_011641238.1">
    <property type="nucleotide sequence ID" value="NC_008346.1"/>
</dbReference>
<dbReference type="SMR" id="Q0AVW1"/>
<dbReference type="STRING" id="335541.Swol_1845"/>
<dbReference type="KEGG" id="swo:Swol_1845"/>
<dbReference type="eggNOG" id="COG0825">
    <property type="taxonomic scope" value="Bacteria"/>
</dbReference>
<dbReference type="HOGENOM" id="CLU_015486_0_2_9"/>
<dbReference type="OrthoDB" id="9808023at2"/>
<dbReference type="UniPathway" id="UPA00655">
    <property type="reaction ID" value="UER00711"/>
</dbReference>
<dbReference type="Proteomes" id="UP000001968">
    <property type="component" value="Chromosome"/>
</dbReference>
<dbReference type="GO" id="GO:0009317">
    <property type="term" value="C:acetyl-CoA carboxylase complex"/>
    <property type="evidence" value="ECO:0007669"/>
    <property type="project" value="InterPro"/>
</dbReference>
<dbReference type="GO" id="GO:0003989">
    <property type="term" value="F:acetyl-CoA carboxylase activity"/>
    <property type="evidence" value="ECO:0007669"/>
    <property type="project" value="InterPro"/>
</dbReference>
<dbReference type="GO" id="GO:0005524">
    <property type="term" value="F:ATP binding"/>
    <property type="evidence" value="ECO:0007669"/>
    <property type="project" value="UniProtKB-KW"/>
</dbReference>
<dbReference type="GO" id="GO:0016743">
    <property type="term" value="F:carboxyl- or carbamoyltransferase activity"/>
    <property type="evidence" value="ECO:0007669"/>
    <property type="project" value="UniProtKB-UniRule"/>
</dbReference>
<dbReference type="GO" id="GO:0006633">
    <property type="term" value="P:fatty acid biosynthetic process"/>
    <property type="evidence" value="ECO:0007669"/>
    <property type="project" value="UniProtKB-KW"/>
</dbReference>
<dbReference type="GO" id="GO:2001295">
    <property type="term" value="P:malonyl-CoA biosynthetic process"/>
    <property type="evidence" value="ECO:0007669"/>
    <property type="project" value="UniProtKB-UniRule"/>
</dbReference>
<dbReference type="Gene3D" id="3.90.226.10">
    <property type="entry name" value="2-enoyl-CoA Hydratase, Chain A, domain 1"/>
    <property type="match status" value="1"/>
</dbReference>
<dbReference type="HAMAP" id="MF_00823">
    <property type="entry name" value="AcetylCoA_CT_alpha"/>
    <property type="match status" value="1"/>
</dbReference>
<dbReference type="InterPro" id="IPR001095">
    <property type="entry name" value="Acetyl_CoA_COase_a_su"/>
</dbReference>
<dbReference type="InterPro" id="IPR029045">
    <property type="entry name" value="ClpP/crotonase-like_dom_sf"/>
</dbReference>
<dbReference type="InterPro" id="IPR011763">
    <property type="entry name" value="COA_CT_C"/>
</dbReference>
<dbReference type="NCBIfam" id="TIGR00513">
    <property type="entry name" value="accA"/>
    <property type="match status" value="1"/>
</dbReference>
<dbReference type="NCBIfam" id="NF041504">
    <property type="entry name" value="AccA_sub"/>
    <property type="match status" value="1"/>
</dbReference>
<dbReference type="NCBIfam" id="NF004344">
    <property type="entry name" value="PRK05724.1"/>
    <property type="match status" value="1"/>
</dbReference>
<dbReference type="PANTHER" id="PTHR42853">
    <property type="entry name" value="ACETYL-COENZYME A CARBOXYLASE CARBOXYL TRANSFERASE SUBUNIT ALPHA"/>
    <property type="match status" value="1"/>
</dbReference>
<dbReference type="PANTHER" id="PTHR42853:SF3">
    <property type="entry name" value="ACETYL-COENZYME A CARBOXYLASE CARBOXYL TRANSFERASE SUBUNIT ALPHA, CHLOROPLASTIC"/>
    <property type="match status" value="1"/>
</dbReference>
<dbReference type="Pfam" id="PF03255">
    <property type="entry name" value="ACCA"/>
    <property type="match status" value="1"/>
</dbReference>
<dbReference type="PRINTS" id="PR01069">
    <property type="entry name" value="ACCCTRFRASEA"/>
</dbReference>
<dbReference type="SUPFAM" id="SSF52096">
    <property type="entry name" value="ClpP/crotonase"/>
    <property type="match status" value="1"/>
</dbReference>
<dbReference type="PROSITE" id="PS50989">
    <property type="entry name" value="COA_CT_CTER"/>
    <property type="match status" value="1"/>
</dbReference>
<accession>Q0AVW1</accession>
<sequence length="318" mass="36097">MVKRQFDYEQKVQEIREKLEELNNLSSNMEFDLSQEIESLEEKIENNRERRYKNLSPWEKVLLSRHPERPNSNDYIRYFCEEWIELHGDRHFGDDSSVIGGIGRFNGQAVTILGYRKGKDTRENLQYNFGMPHPEGYRKIQRLLLQAEKFQRPVITLIDTPGAYPGIGAEERGQAWAISQVLMTLSALEVPVIAVVSGEGGSGGALALAVADRLLMLSNAVFSVASPEACASILWKELERVEDMARAMKITANDLQRLGIVDEIIEEPLGGAHLNFPEMAEKLKKALQKHLGEILSQDSGELLEERFQKLRKIGEFRG</sequence>
<gene>
    <name evidence="1" type="primary">accA</name>
    <name type="ordered locus">Swol_1845</name>
</gene>
<proteinExistence type="inferred from homology"/>
<protein>
    <recommendedName>
        <fullName evidence="1">Acetyl-coenzyme A carboxylase carboxyl transferase subunit alpha</fullName>
        <shortName evidence="1">ACCase subunit alpha</shortName>
        <shortName evidence="1">Acetyl-CoA carboxylase carboxyltransferase subunit alpha</shortName>
        <ecNumber evidence="1">2.1.3.15</ecNumber>
    </recommendedName>
</protein>
<feature type="chain" id="PRO_1000134532" description="Acetyl-coenzyme A carboxylase carboxyl transferase subunit alpha">
    <location>
        <begin position="1"/>
        <end position="318"/>
    </location>
</feature>
<feature type="domain" description="CoA carboxyltransferase C-terminal" evidence="2">
    <location>
        <begin position="32"/>
        <end position="293"/>
    </location>
</feature>
<comment type="function">
    <text evidence="1">Component of the acetyl coenzyme A carboxylase (ACC) complex. First, biotin carboxylase catalyzes the carboxylation of biotin on its carrier protein (BCCP) and then the CO(2) group is transferred by the carboxyltransferase to acetyl-CoA to form malonyl-CoA.</text>
</comment>
<comment type="catalytic activity">
    <reaction evidence="1">
        <text>N(6)-carboxybiotinyl-L-lysyl-[protein] + acetyl-CoA = N(6)-biotinyl-L-lysyl-[protein] + malonyl-CoA</text>
        <dbReference type="Rhea" id="RHEA:54728"/>
        <dbReference type="Rhea" id="RHEA-COMP:10505"/>
        <dbReference type="Rhea" id="RHEA-COMP:10506"/>
        <dbReference type="ChEBI" id="CHEBI:57288"/>
        <dbReference type="ChEBI" id="CHEBI:57384"/>
        <dbReference type="ChEBI" id="CHEBI:83144"/>
        <dbReference type="ChEBI" id="CHEBI:83145"/>
        <dbReference type="EC" id="2.1.3.15"/>
    </reaction>
</comment>
<comment type="pathway">
    <text evidence="1">Lipid metabolism; malonyl-CoA biosynthesis; malonyl-CoA from acetyl-CoA: step 1/1.</text>
</comment>
<comment type="subunit">
    <text evidence="1">Acetyl-CoA carboxylase is a heterohexamer composed of biotin carboxyl carrier protein (AccB), biotin carboxylase (AccC) and two subunits each of ACCase subunit alpha (AccA) and ACCase subunit beta (AccD).</text>
</comment>
<comment type="subcellular location">
    <subcellularLocation>
        <location evidence="1">Cytoplasm</location>
    </subcellularLocation>
</comment>
<comment type="similarity">
    <text evidence="1">Belongs to the AccA family.</text>
</comment>
<organism>
    <name type="scientific">Syntrophomonas wolfei subsp. wolfei (strain DSM 2245B / Goettingen)</name>
    <dbReference type="NCBI Taxonomy" id="335541"/>
    <lineage>
        <taxon>Bacteria</taxon>
        <taxon>Bacillati</taxon>
        <taxon>Bacillota</taxon>
        <taxon>Clostridia</taxon>
        <taxon>Eubacteriales</taxon>
        <taxon>Syntrophomonadaceae</taxon>
        <taxon>Syntrophomonas</taxon>
    </lineage>
</organism>
<keyword id="KW-0067">ATP-binding</keyword>
<keyword id="KW-0963">Cytoplasm</keyword>
<keyword id="KW-0275">Fatty acid biosynthesis</keyword>
<keyword id="KW-0276">Fatty acid metabolism</keyword>
<keyword id="KW-0444">Lipid biosynthesis</keyword>
<keyword id="KW-0443">Lipid metabolism</keyword>
<keyword id="KW-0547">Nucleotide-binding</keyword>
<keyword id="KW-1185">Reference proteome</keyword>
<keyword id="KW-0808">Transferase</keyword>
<name>ACCA_SYNWW</name>
<evidence type="ECO:0000255" key="1">
    <source>
        <dbReference type="HAMAP-Rule" id="MF_00823"/>
    </source>
</evidence>
<evidence type="ECO:0000255" key="2">
    <source>
        <dbReference type="PROSITE-ProRule" id="PRU01137"/>
    </source>
</evidence>
<reference key="1">
    <citation type="journal article" date="2010" name="Environ. Microbiol.">
        <title>The genome of Syntrophomonas wolfei: new insights into syntrophic metabolism and biohydrogen production.</title>
        <authorList>
            <person name="Sieber J.R."/>
            <person name="Sims D.R."/>
            <person name="Han C."/>
            <person name="Kim E."/>
            <person name="Lykidis A."/>
            <person name="Lapidus A.L."/>
            <person name="McDonnald E."/>
            <person name="Rohlin L."/>
            <person name="Culley D.E."/>
            <person name="Gunsalus R."/>
            <person name="McInerney M.J."/>
        </authorList>
    </citation>
    <scope>NUCLEOTIDE SEQUENCE [LARGE SCALE GENOMIC DNA]</scope>
    <source>
        <strain>DSM 2245B / Goettingen</strain>
    </source>
</reference>